<sequence>MTRLENIYREKVVPVLQKEFNYDSSMQVPGIVKVSLNIGLGAASQNNKLMEEALKELTVIAGQKAVVTRAKKSIASFKLREGMPIGCRVTLRKERMWDFLDKLINFALPRVRDFRGVPDRGFDGRGNFTLGIKEHAIFPEMEADRVENPKGMNITIVTTATTDKEGKLLLDQLGMPFRK</sequence>
<accession>Q72CG8</accession>
<organism>
    <name type="scientific">Nitratidesulfovibrio vulgaris (strain ATCC 29579 / DSM 644 / CCUG 34227 / NCIMB 8303 / VKM B-1760 / Hildenborough)</name>
    <name type="common">Desulfovibrio vulgaris</name>
    <dbReference type="NCBI Taxonomy" id="882"/>
    <lineage>
        <taxon>Bacteria</taxon>
        <taxon>Pseudomonadati</taxon>
        <taxon>Thermodesulfobacteriota</taxon>
        <taxon>Desulfovibrionia</taxon>
        <taxon>Desulfovibrionales</taxon>
        <taxon>Desulfovibrionaceae</taxon>
        <taxon>Nitratidesulfovibrio</taxon>
    </lineage>
</organism>
<name>RL5_NITV2</name>
<comment type="function">
    <text evidence="1">This is one of the proteins that bind and probably mediate the attachment of the 5S RNA into the large ribosomal subunit, where it forms part of the central protuberance. In the 70S ribosome it contacts protein S13 of the 30S subunit (bridge B1b), connecting the 2 subunits; this bridge is implicated in subunit movement. Contacts the P site tRNA; the 5S rRNA and some of its associated proteins might help stabilize positioning of ribosome-bound tRNAs.</text>
</comment>
<comment type="subunit">
    <text evidence="1">Part of the 50S ribosomal subunit; part of the 5S rRNA/L5/L18/L25 subcomplex. Contacts the 5S rRNA and the P site tRNA. Forms a bridge to the 30S subunit in the 70S ribosome.</text>
</comment>
<comment type="similarity">
    <text evidence="1">Belongs to the universal ribosomal protein uL5 family.</text>
</comment>
<evidence type="ECO:0000255" key="1">
    <source>
        <dbReference type="HAMAP-Rule" id="MF_01333"/>
    </source>
</evidence>
<evidence type="ECO:0000305" key="2"/>
<gene>
    <name evidence="1" type="primary">rplE</name>
    <name type="ordered locus">DVU_1315</name>
</gene>
<keyword id="KW-1185">Reference proteome</keyword>
<keyword id="KW-0687">Ribonucleoprotein</keyword>
<keyword id="KW-0689">Ribosomal protein</keyword>
<keyword id="KW-0694">RNA-binding</keyword>
<keyword id="KW-0699">rRNA-binding</keyword>
<keyword id="KW-0820">tRNA-binding</keyword>
<protein>
    <recommendedName>
        <fullName evidence="1">Large ribosomal subunit protein uL5</fullName>
    </recommendedName>
    <alternativeName>
        <fullName evidence="2">50S ribosomal protein L5</fullName>
    </alternativeName>
</protein>
<reference key="1">
    <citation type="journal article" date="2004" name="Nat. Biotechnol.">
        <title>The genome sequence of the anaerobic, sulfate-reducing bacterium Desulfovibrio vulgaris Hildenborough.</title>
        <authorList>
            <person name="Heidelberg J.F."/>
            <person name="Seshadri R."/>
            <person name="Haveman S.A."/>
            <person name="Hemme C.L."/>
            <person name="Paulsen I.T."/>
            <person name="Kolonay J.F."/>
            <person name="Eisen J.A."/>
            <person name="Ward N.L."/>
            <person name="Methe B.A."/>
            <person name="Brinkac L.M."/>
            <person name="Daugherty S.C."/>
            <person name="DeBoy R.T."/>
            <person name="Dodson R.J."/>
            <person name="Durkin A.S."/>
            <person name="Madupu R."/>
            <person name="Nelson W.C."/>
            <person name="Sullivan S.A."/>
            <person name="Fouts D.E."/>
            <person name="Haft D.H."/>
            <person name="Selengut J."/>
            <person name="Peterson J.D."/>
            <person name="Davidsen T.M."/>
            <person name="Zafar N."/>
            <person name="Zhou L."/>
            <person name="Radune D."/>
            <person name="Dimitrov G."/>
            <person name="Hance M."/>
            <person name="Tran K."/>
            <person name="Khouri H.M."/>
            <person name="Gill J."/>
            <person name="Utterback T.R."/>
            <person name="Feldblyum T.V."/>
            <person name="Wall J.D."/>
            <person name="Voordouw G."/>
            <person name="Fraser C.M."/>
        </authorList>
    </citation>
    <scope>NUCLEOTIDE SEQUENCE [LARGE SCALE GENOMIC DNA]</scope>
    <source>
        <strain>ATCC 29579 / DSM 644 / CCUG 34227 / NCIMB 8303 / VKM B-1760 / Hildenborough</strain>
    </source>
</reference>
<feature type="chain" id="PRO_0000124924" description="Large ribosomal subunit protein uL5">
    <location>
        <begin position="1"/>
        <end position="179"/>
    </location>
</feature>
<dbReference type="EMBL" id="AE017285">
    <property type="protein sequence ID" value="AAS95793.1"/>
    <property type="molecule type" value="Genomic_DNA"/>
</dbReference>
<dbReference type="RefSeq" id="WP_010938610.1">
    <property type="nucleotide sequence ID" value="NC_002937.3"/>
</dbReference>
<dbReference type="RefSeq" id="YP_010534.1">
    <property type="nucleotide sequence ID" value="NC_002937.3"/>
</dbReference>
<dbReference type="SMR" id="Q72CG8"/>
<dbReference type="STRING" id="882.DVU_1315"/>
<dbReference type="PaxDb" id="882-DVU_1315"/>
<dbReference type="EnsemblBacteria" id="AAS95793">
    <property type="protein sequence ID" value="AAS95793"/>
    <property type="gene ID" value="DVU_1315"/>
</dbReference>
<dbReference type="KEGG" id="dvu:DVU_1315"/>
<dbReference type="PATRIC" id="fig|882.5.peg.1227"/>
<dbReference type="eggNOG" id="COG0094">
    <property type="taxonomic scope" value="Bacteria"/>
</dbReference>
<dbReference type="HOGENOM" id="CLU_061015_2_1_7"/>
<dbReference type="OrthoDB" id="9806626at2"/>
<dbReference type="PhylomeDB" id="Q72CG8"/>
<dbReference type="Proteomes" id="UP000002194">
    <property type="component" value="Chromosome"/>
</dbReference>
<dbReference type="GO" id="GO:1990904">
    <property type="term" value="C:ribonucleoprotein complex"/>
    <property type="evidence" value="ECO:0007669"/>
    <property type="project" value="UniProtKB-KW"/>
</dbReference>
<dbReference type="GO" id="GO:0005840">
    <property type="term" value="C:ribosome"/>
    <property type="evidence" value="ECO:0007669"/>
    <property type="project" value="UniProtKB-KW"/>
</dbReference>
<dbReference type="GO" id="GO:0019843">
    <property type="term" value="F:rRNA binding"/>
    <property type="evidence" value="ECO:0007669"/>
    <property type="project" value="UniProtKB-UniRule"/>
</dbReference>
<dbReference type="GO" id="GO:0003735">
    <property type="term" value="F:structural constituent of ribosome"/>
    <property type="evidence" value="ECO:0007669"/>
    <property type="project" value="InterPro"/>
</dbReference>
<dbReference type="GO" id="GO:0000049">
    <property type="term" value="F:tRNA binding"/>
    <property type="evidence" value="ECO:0007669"/>
    <property type="project" value="UniProtKB-UniRule"/>
</dbReference>
<dbReference type="GO" id="GO:0006412">
    <property type="term" value="P:translation"/>
    <property type="evidence" value="ECO:0007669"/>
    <property type="project" value="UniProtKB-UniRule"/>
</dbReference>
<dbReference type="FunFam" id="3.30.1440.10:FF:000001">
    <property type="entry name" value="50S ribosomal protein L5"/>
    <property type="match status" value="1"/>
</dbReference>
<dbReference type="Gene3D" id="3.30.1440.10">
    <property type="match status" value="1"/>
</dbReference>
<dbReference type="HAMAP" id="MF_01333_B">
    <property type="entry name" value="Ribosomal_uL5_B"/>
    <property type="match status" value="1"/>
</dbReference>
<dbReference type="InterPro" id="IPR002132">
    <property type="entry name" value="Ribosomal_uL5"/>
</dbReference>
<dbReference type="InterPro" id="IPR020930">
    <property type="entry name" value="Ribosomal_uL5_bac-type"/>
</dbReference>
<dbReference type="InterPro" id="IPR031309">
    <property type="entry name" value="Ribosomal_uL5_C"/>
</dbReference>
<dbReference type="InterPro" id="IPR020929">
    <property type="entry name" value="Ribosomal_uL5_CS"/>
</dbReference>
<dbReference type="InterPro" id="IPR022803">
    <property type="entry name" value="Ribosomal_uL5_dom_sf"/>
</dbReference>
<dbReference type="InterPro" id="IPR031310">
    <property type="entry name" value="Ribosomal_uL5_N"/>
</dbReference>
<dbReference type="NCBIfam" id="NF000585">
    <property type="entry name" value="PRK00010.1"/>
    <property type="match status" value="1"/>
</dbReference>
<dbReference type="PANTHER" id="PTHR11994">
    <property type="entry name" value="60S RIBOSOMAL PROTEIN L11-RELATED"/>
    <property type="match status" value="1"/>
</dbReference>
<dbReference type="Pfam" id="PF00281">
    <property type="entry name" value="Ribosomal_L5"/>
    <property type="match status" value="1"/>
</dbReference>
<dbReference type="Pfam" id="PF00673">
    <property type="entry name" value="Ribosomal_L5_C"/>
    <property type="match status" value="1"/>
</dbReference>
<dbReference type="PIRSF" id="PIRSF002161">
    <property type="entry name" value="Ribosomal_L5"/>
    <property type="match status" value="1"/>
</dbReference>
<dbReference type="SUPFAM" id="SSF55282">
    <property type="entry name" value="RL5-like"/>
    <property type="match status" value="1"/>
</dbReference>
<dbReference type="PROSITE" id="PS00358">
    <property type="entry name" value="RIBOSOMAL_L5"/>
    <property type="match status" value="1"/>
</dbReference>
<proteinExistence type="inferred from homology"/>